<name>MSRQ_SALPK</name>
<comment type="function">
    <text evidence="1">Part of the MsrPQ system that repairs oxidized periplasmic proteins containing methionine sulfoxide residues (Met-O), using respiratory chain electrons. Thus protects these proteins from oxidative-stress damage caused by reactive species of oxygen and chlorine generated by the host defense mechanisms. MsrPQ is essential for the maintenance of envelope integrity under bleach stress, rescuing a wide series of structurally unrelated periplasmic proteins from methionine oxidation, including the primary periplasmic chaperone SurA and the lipoprotein Pal. MsrQ provides electrons for reduction to the reductase catalytic subunit MsrP, using the quinone pool of the respiratory chain.</text>
</comment>
<comment type="cofactor">
    <cofactor evidence="1">
        <name>FMN</name>
        <dbReference type="ChEBI" id="CHEBI:58210"/>
    </cofactor>
    <text evidence="1">Binds 1 FMN per subunit.</text>
</comment>
<comment type="cofactor">
    <cofactor evidence="1">
        <name>heme b</name>
        <dbReference type="ChEBI" id="CHEBI:60344"/>
    </cofactor>
    <text evidence="1">Binds 1 heme b (iron(II)-protoporphyrin IX) group per subunit.</text>
</comment>
<comment type="subunit">
    <text evidence="1">Heterodimer of a catalytic subunit (MsrP) and a heme-binding subunit (MsrQ).</text>
</comment>
<comment type="subcellular location">
    <subcellularLocation>
        <location evidence="1">Cell inner membrane</location>
        <topology evidence="1">Multi-pass membrane protein</topology>
    </subcellularLocation>
</comment>
<comment type="similarity">
    <text evidence="1">Belongs to the MsrQ family.</text>
</comment>
<proteinExistence type="inferred from homology"/>
<feature type="chain" id="PRO_1000138746" description="Protein-methionine-sulfoxide reductase heme-binding subunit MsrQ">
    <location>
        <begin position="1"/>
        <end position="199"/>
    </location>
</feature>
<feature type="transmembrane region" description="Helical" evidence="1">
    <location>
        <begin position="10"/>
        <end position="30"/>
    </location>
</feature>
<feature type="transmembrane region" description="Helical" evidence="1">
    <location>
        <begin position="82"/>
        <end position="102"/>
    </location>
</feature>
<feature type="transmembrane region" description="Helical" evidence="1">
    <location>
        <begin position="116"/>
        <end position="136"/>
    </location>
</feature>
<feature type="transmembrane region" description="Helical" evidence="1">
    <location>
        <begin position="153"/>
        <end position="173"/>
    </location>
</feature>
<sequence>MRLTVKQITWLKVCLHLAGFLPLLWLFWAINHGGLSADPVKDIQHFTGRTALKFLLATLLVSPLARYAKQPLLIRTRRLLGLWCFVWATLHLTSYALLELGIHNLALLGSELISRPYLTLGIISWLVLLALTLTSTQFAQRKLGKRWQTLHNVVYLVAILAPIHYLWSVKILSPQPVIYAALALALLALRYRKFRQWWR</sequence>
<accession>B5BGT2</accession>
<reference key="1">
    <citation type="journal article" date="2009" name="BMC Genomics">
        <title>Pseudogene accumulation in the evolutionary histories of Salmonella enterica serovars Paratyphi A and Typhi.</title>
        <authorList>
            <person name="Holt K.E."/>
            <person name="Thomson N.R."/>
            <person name="Wain J."/>
            <person name="Langridge G.C."/>
            <person name="Hasan R."/>
            <person name="Bhutta Z.A."/>
            <person name="Quail M.A."/>
            <person name="Norbertczak H."/>
            <person name="Walker D."/>
            <person name="Simmonds M."/>
            <person name="White B."/>
            <person name="Bason N."/>
            <person name="Mungall K."/>
            <person name="Dougan G."/>
            <person name="Parkhill J."/>
        </authorList>
    </citation>
    <scope>NUCLEOTIDE SEQUENCE [LARGE SCALE GENOMIC DNA]</scope>
    <source>
        <strain>AKU_12601</strain>
    </source>
</reference>
<protein>
    <recommendedName>
        <fullName evidence="1">Protein-methionine-sulfoxide reductase heme-binding subunit MsrQ</fullName>
    </recommendedName>
    <alternativeName>
        <fullName evidence="1">Flavocytochrome MsrQ</fullName>
    </alternativeName>
</protein>
<gene>
    <name evidence="1" type="primary">msrQ</name>
    <name type="ordered locus">SSPA3031</name>
</gene>
<evidence type="ECO:0000255" key="1">
    <source>
        <dbReference type="HAMAP-Rule" id="MF_01207"/>
    </source>
</evidence>
<keyword id="KW-0997">Cell inner membrane</keyword>
<keyword id="KW-1003">Cell membrane</keyword>
<keyword id="KW-0249">Electron transport</keyword>
<keyword id="KW-0285">Flavoprotein</keyword>
<keyword id="KW-0288">FMN</keyword>
<keyword id="KW-0349">Heme</keyword>
<keyword id="KW-0408">Iron</keyword>
<keyword id="KW-0472">Membrane</keyword>
<keyword id="KW-0479">Metal-binding</keyword>
<keyword id="KW-0812">Transmembrane</keyword>
<keyword id="KW-1133">Transmembrane helix</keyword>
<keyword id="KW-0813">Transport</keyword>
<organism>
    <name type="scientific">Salmonella paratyphi A (strain AKU_12601)</name>
    <dbReference type="NCBI Taxonomy" id="554290"/>
    <lineage>
        <taxon>Bacteria</taxon>
        <taxon>Pseudomonadati</taxon>
        <taxon>Pseudomonadota</taxon>
        <taxon>Gammaproteobacteria</taxon>
        <taxon>Enterobacterales</taxon>
        <taxon>Enterobacteriaceae</taxon>
        <taxon>Salmonella</taxon>
    </lineage>
</organism>
<dbReference type="EMBL" id="FM200053">
    <property type="protein sequence ID" value="CAR61281.1"/>
    <property type="molecule type" value="Genomic_DNA"/>
</dbReference>
<dbReference type="RefSeq" id="WP_001241496.1">
    <property type="nucleotide sequence ID" value="NC_011147.1"/>
</dbReference>
<dbReference type="SMR" id="B5BGT2"/>
<dbReference type="KEGG" id="sek:SSPA3031"/>
<dbReference type="HOGENOM" id="CLU_080662_1_0_6"/>
<dbReference type="Proteomes" id="UP000001869">
    <property type="component" value="Chromosome"/>
</dbReference>
<dbReference type="GO" id="GO:0005886">
    <property type="term" value="C:plasma membrane"/>
    <property type="evidence" value="ECO:0007669"/>
    <property type="project" value="UniProtKB-SubCell"/>
</dbReference>
<dbReference type="GO" id="GO:0009055">
    <property type="term" value="F:electron transfer activity"/>
    <property type="evidence" value="ECO:0007669"/>
    <property type="project" value="UniProtKB-UniRule"/>
</dbReference>
<dbReference type="GO" id="GO:0010181">
    <property type="term" value="F:FMN binding"/>
    <property type="evidence" value="ECO:0007669"/>
    <property type="project" value="UniProtKB-UniRule"/>
</dbReference>
<dbReference type="GO" id="GO:0020037">
    <property type="term" value="F:heme binding"/>
    <property type="evidence" value="ECO:0007669"/>
    <property type="project" value="UniProtKB-UniRule"/>
</dbReference>
<dbReference type="GO" id="GO:0046872">
    <property type="term" value="F:metal ion binding"/>
    <property type="evidence" value="ECO:0007669"/>
    <property type="project" value="UniProtKB-KW"/>
</dbReference>
<dbReference type="GO" id="GO:0016679">
    <property type="term" value="F:oxidoreductase activity, acting on diphenols and related substances as donors"/>
    <property type="evidence" value="ECO:0007669"/>
    <property type="project" value="TreeGrafter"/>
</dbReference>
<dbReference type="GO" id="GO:0030091">
    <property type="term" value="P:protein repair"/>
    <property type="evidence" value="ECO:0007669"/>
    <property type="project" value="UniProtKB-UniRule"/>
</dbReference>
<dbReference type="HAMAP" id="MF_01207">
    <property type="entry name" value="MsrQ"/>
    <property type="match status" value="1"/>
</dbReference>
<dbReference type="InterPro" id="IPR013130">
    <property type="entry name" value="Fe3_Rdtase_TM_dom"/>
</dbReference>
<dbReference type="InterPro" id="IPR022837">
    <property type="entry name" value="MsrQ-like"/>
</dbReference>
<dbReference type="NCBIfam" id="NF003832">
    <property type="entry name" value="PRK05419.1-4"/>
    <property type="match status" value="1"/>
</dbReference>
<dbReference type="PANTHER" id="PTHR36964">
    <property type="entry name" value="PROTEIN-METHIONINE-SULFOXIDE REDUCTASE HEME-BINDING SUBUNIT MSRQ"/>
    <property type="match status" value="1"/>
</dbReference>
<dbReference type="PANTHER" id="PTHR36964:SF1">
    <property type="entry name" value="PROTEIN-METHIONINE-SULFOXIDE REDUCTASE HEME-BINDING SUBUNIT MSRQ"/>
    <property type="match status" value="1"/>
</dbReference>
<dbReference type="Pfam" id="PF01794">
    <property type="entry name" value="Ferric_reduct"/>
    <property type="match status" value="1"/>
</dbReference>